<feature type="chain" id="PRO_0000112908" description="Ornithine carbamoyltransferase">
    <location>
        <begin position="1"/>
        <end position="307"/>
    </location>
</feature>
<feature type="binding site" evidence="2">
    <location>
        <begin position="54"/>
        <end position="57"/>
    </location>
    <ligand>
        <name>carbamoyl phosphate</name>
        <dbReference type="ChEBI" id="CHEBI:58228"/>
    </ligand>
</feature>
<feature type="binding site" evidence="2">
    <location>
        <position position="81"/>
    </location>
    <ligand>
        <name>carbamoyl phosphate</name>
        <dbReference type="ChEBI" id="CHEBI:58228"/>
    </ligand>
</feature>
<feature type="binding site" evidence="2">
    <location>
        <position position="105"/>
    </location>
    <ligand>
        <name>carbamoyl phosphate</name>
        <dbReference type="ChEBI" id="CHEBI:58228"/>
    </ligand>
</feature>
<feature type="binding site" evidence="2">
    <location>
        <begin position="132"/>
        <end position="135"/>
    </location>
    <ligand>
        <name>carbamoyl phosphate</name>
        <dbReference type="ChEBI" id="CHEBI:58228"/>
    </ligand>
</feature>
<feature type="binding site" evidence="2">
    <location>
        <position position="163"/>
    </location>
    <ligand>
        <name>L-ornithine</name>
        <dbReference type="ChEBI" id="CHEBI:46911"/>
    </ligand>
</feature>
<feature type="binding site" evidence="2">
    <location>
        <position position="221"/>
    </location>
    <ligand>
        <name>L-ornithine</name>
        <dbReference type="ChEBI" id="CHEBI:46911"/>
    </ligand>
</feature>
<feature type="binding site" evidence="2">
    <location>
        <begin position="225"/>
        <end position="226"/>
    </location>
    <ligand>
        <name>L-ornithine</name>
        <dbReference type="ChEBI" id="CHEBI:46911"/>
    </ligand>
</feature>
<feature type="binding site" evidence="2">
    <location>
        <begin position="261"/>
        <end position="262"/>
    </location>
    <ligand>
        <name>carbamoyl phosphate</name>
        <dbReference type="ChEBI" id="CHEBI:58228"/>
    </ligand>
</feature>
<feature type="binding site" evidence="2">
    <location>
        <position position="289"/>
    </location>
    <ligand>
        <name>carbamoyl phosphate</name>
        <dbReference type="ChEBI" id="CHEBI:58228"/>
    </ligand>
</feature>
<accession>Q7NWJ6</accession>
<name>OTC_CHRVO</name>
<organism>
    <name type="scientific">Chromobacterium violaceum (strain ATCC 12472 / DSM 30191 / JCM 1249 / CCUG 213 / NBRC 12614 / NCIMB 9131 / NCTC 9757 / MK)</name>
    <dbReference type="NCBI Taxonomy" id="243365"/>
    <lineage>
        <taxon>Bacteria</taxon>
        <taxon>Pseudomonadati</taxon>
        <taxon>Pseudomonadota</taxon>
        <taxon>Betaproteobacteria</taxon>
        <taxon>Neisseriales</taxon>
        <taxon>Chromobacteriaceae</taxon>
        <taxon>Chromobacterium</taxon>
    </lineage>
</organism>
<evidence type="ECO:0000250" key="1"/>
<evidence type="ECO:0000255" key="2">
    <source>
        <dbReference type="HAMAP-Rule" id="MF_01109"/>
    </source>
</evidence>
<proteinExistence type="inferred from homology"/>
<sequence>MTSVRHYLQFSDLSPDEYHHLFERSRVLKRRQSAGELHRPLVGKVMSMVFEKNSTRTRVSFEAGMAQLGGHAMFLDTKSSQIGRGEPIEDTARVLSRMSDIIMIRTFEQGLVQRLAAHSRVPVINGLTNEYHPCQVLADIFTYVERHGSIKGKTVAWVGDGNNVCRTWLQAAAVLGFKLKVASPLGYELQTLDGRHYGSDVLEMTRDPARAVHGADIVTTDVFTSMGFEAEQAARREAFEGYQVTAELMKQAKPEALFMHCLPAHRGEEVAAEVIDGPQSVVWDEAENRMHVQKALIEYLLLGHRED</sequence>
<reference key="1">
    <citation type="journal article" date="2003" name="Proc. Natl. Acad. Sci. U.S.A.">
        <title>The complete genome sequence of Chromobacterium violaceum reveals remarkable and exploitable bacterial adaptability.</title>
        <authorList>
            <person name="Vasconcelos A.T.R."/>
            <person name="de Almeida D.F."/>
            <person name="Hungria M."/>
            <person name="Guimaraes C.T."/>
            <person name="Antonio R.V."/>
            <person name="Almeida F.C."/>
            <person name="de Almeida L.G.P."/>
            <person name="de Almeida R."/>
            <person name="Alves-Gomes J.A."/>
            <person name="Andrade E.M."/>
            <person name="Araripe J."/>
            <person name="de Araujo M.F.F."/>
            <person name="Astolfi-Filho S."/>
            <person name="Azevedo V."/>
            <person name="Baptista A.J."/>
            <person name="Bataus L.A.M."/>
            <person name="Batista J.S."/>
            <person name="Belo A."/>
            <person name="van den Berg C."/>
            <person name="Bogo M."/>
            <person name="Bonatto S."/>
            <person name="Bordignon J."/>
            <person name="Brigido M.M."/>
            <person name="Brito C.A."/>
            <person name="Brocchi M."/>
            <person name="Burity H.A."/>
            <person name="Camargo A.A."/>
            <person name="Cardoso D.D.P."/>
            <person name="Carneiro N.P."/>
            <person name="Carraro D.M."/>
            <person name="Carvalho C.M.B."/>
            <person name="Cascardo J.C.M."/>
            <person name="Cavada B.S."/>
            <person name="Chueire L.M.O."/>
            <person name="Creczynski-Pasa T.B."/>
            <person name="Cunha-Junior N.C."/>
            <person name="Fagundes N."/>
            <person name="Falcao C.L."/>
            <person name="Fantinatti F."/>
            <person name="Farias I.P."/>
            <person name="Felipe M.S.S."/>
            <person name="Ferrari L.P."/>
            <person name="Ferro J.A."/>
            <person name="Ferro M.I.T."/>
            <person name="Franco G.R."/>
            <person name="Freitas N.S.A."/>
            <person name="Furlan L.R."/>
            <person name="Gazzinelli R.T."/>
            <person name="Gomes E.A."/>
            <person name="Goncalves P.R."/>
            <person name="Grangeiro T.B."/>
            <person name="Grattapaglia D."/>
            <person name="Grisard E.C."/>
            <person name="Hanna E.S."/>
            <person name="Jardim S.N."/>
            <person name="Laurino J."/>
            <person name="Leoi L.C.T."/>
            <person name="Lima L.F.A."/>
            <person name="Loureiro M.F."/>
            <person name="Lyra M.C.C.P."/>
            <person name="Madeira H.M.F."/>
            <person name="Manfio G.P."/>
            <person name="Maranhao A.Q."/>
            <person name="Martins W.S."/>
            <person name="di Mauro S.M.Z."/>
            <person name="de Medeiros S.R.B."/>
            <person name="Meissner R.V."/>
            <person name="Moreira M.A.M."/>
            <person name="Nascimento F.F."/>
            <person name="Nicolas M.F."/>
            <person name="Oliveira J.G."/>
            <person name="Oliveira S.C."/>
            <person name="Paixao R.F.C."/>
            <person name="Parente J.A."/>
            <person name="Pedrosa F.O."/>
            <person name="Pena S.D.J."/>
            <person name="Pereira J.O."/>
            <person name="Pereira M."/>
            <person name="Pinto L.S.R.C."/>
            <person name="Pinto L.S."/>
            <person name="Porto J.I.R."/>
            <person name="Potrich D.P."/>
            <person name="Ramalho-Neto C.E."/>
            <person name="Reis A.M.M."/>
            <person name="Rigo L.U."/>
            <person name="Rondinelli E."/>
            <person name="Santos E.B.P."/>
            <person name="Santos F.R."/>
            <person name="Schneider M.P.C."/>
            <person name="Seuanez H.N."/>
            <person name="Silva A.M.R."/>
            <person name="da Silva A.L.C."/>
            <person name="Silva D.W."/>
            <person name="Silva R."/>
            <person name="Simoes I.C."/>
            <person name="Simon D."/>
            <person name="Soares C.M.A."/>
            <person name="Soares R.B.A."/>
            <person name="Souza E.M."/>
            <person name="Souza K.R.L."/>
            <person name="Souza R.C."/>
            <person name="Steffens M.B.R."/>
            <person name="Steindel M."/>
            <person name="Teixeira S.R."/>
            <person name="Urmenyi T."/>
            <person name="Vettore A."/>
            <person name="Wassem R."/>
            <person name="Zaha A."/>
            <person name="Simpson A.J.G."/>
        </authorList>
    </citation>
    <scope>NUCLEOTIDE SEQUENCE [LARGE SCALE GENOMIC DNA]</scope>
    <source>
        <strain>ATCC 12472 / DSM 30191 / JCM 1249 / CCUG 213 / NBRC 12614 / NCIMB 9131 / NCTC 9757 / MK</strain>
    </source>
</reference>
<keyword id="KW-0028">Amino-acid biosynthesis</keyword>
<keyword id="KW-0055">Arginine biosynthesis</keyword>
<keyword id="KW-0963">Cytoplasm</keyword>
<keyword id="KW-1185">Reference proteome</keyword>
<keyword id="KW-0808">Transferase</keyword>
<gene>
    <name evidence="2" type="primary">argF</name>
    <name type="ordered locus">CV_1993</name>
</gene>
<dbReference type="EC" id="2.1.3.3" evidence="2"/>
<dbReference type="EMBL" id="AE016825">
    <property type="protein sequence ID" value="AAQ59665.1"/>
    <property type="molecule type" value="Genomic_DNA"/>
</dbReference>
<dbReference type="RefSeq" id="WP_011135541.1">
    <property type="nucleotide sequence ID" value="NC_005085.1"/>
</dbReference>
<dbReference type="SMR" id="Q7NWJ6"/>
<dbReference type="STRING" id="243365.CV_1993"/>
<dbReference type="KEGG" id="cvi:CV_1993"/>
<dbReference type="eggNOG" id="COG0078">
    <property type="taxonomic scope" value="Bacteria"/>
</dbReference>
<dbReference type="HOGENOM" id="CLU_043846_3_2_4"/>
<dbReference type="OrthoDB" id="9802587at2"/>
<dbReference type="UniPathway" id="UPA00068">
    <property type="reaction ID" value="UER00112"/>
</dbReference>
<dbReference type="Proteomes" id="UP000001424">
    <property type="component" value="Chromosome"/>
</dbReference>
<dbReference type="GO" id="GO:0005737">
    <property type="term" value="C:cytoplasm"/>
    <property type="evidence" value="ECO:0007669"/>
    <property type="project" value="UniProtKB-SubCell"/>
</dbReference>
<dbReference type="GO" id="GO:0016597">
    <property type="term" value="F:amino acid binding"/>
    <property type="evidence" value="ECO:0007669"/>
    <property type="project" value="InterPro"/>
</dbReference>
<dbReference type="GO" id="GO:0004585">
    <property type="term" value="F:ornithine carbamoyltransferase activity"/>
    <property type="evidence" value="ECO:0007669"/>
    <property type="project" value="UniProtKB-UniRule"/>
</dbReference>
<dbReference type="GO" id="GO:0042450">
    <property type="term" value="P:arginine biosynthetic process via ornithine"/>
    <property type="evidence" value="ECO:0007669"/>
    <property type="project" value="TreeGrafter"/>
</dbReference>
<dbReference type="GO" id="GO:0019240">
    <property type="term" value="P:citrulline biosynthetic process"/>
    <property type="evidence" value="ECO:0007669"/>
    <property type="project" value="TreeGrafter"/>
</dbReference>
<dbReference type="GO" id="GO:0006526">
    <property type="term" value="P:L-arginine biosynthetic process"/>
    <property type="evidence" value="ECO:0007669"/>
    <property type="project" value="UniProtKB-UniRule"/>
</dbReference>
<dbReference type="FunFam" id="3.40.50.1370:FF:000008">
    <property type="entry name" value="Ornithine carbamoyltransferase"/>
    <property type="match status" value="1"/>
</dbReference>
<dbReference type="Gene3D" id="3.40.50.1370">
    <property type="entry name" value="Aspartate/ornithine carbamoyltransferase"/>
    <property type="match status" value="2"/>
</dbReference>
<dbReference type="HAMAP" id="MF_01109">
    <property type="entry name" value="OTCase"/>
    <property type="match status" value="1"/>
</dbReference>
<dbReference type="InterPro" id="IPR006132">
    <property type="entry name" value="Asp/Orn_carbamoyltranf_P-bd"/>
</dbReference>
<dbReference type="InterPro" id="IPR006130">
    <property type="entry name" value="Asp/Orn_carbamoylTrfase"/>
</dbReference>
<dbReference type="InterPro" id="IPR036901">
    <property type="entry name" value="Asp/Orn_carbamoylTrfase_sf"/>
</dbReference>
<dbReference type="InterPro" id="IPR006131">
    <property type="entry name" value="Asp_carbamoyltransf_Asp/Orn-bd"/>
</dbReference>
<dbReference type="InterPro" id="IPR002292">
    <property type="entry name" value="Orn/put_carbamltrans"/>
</dbReference>
<dbReference type="InterPro" id="IPR024904">
    <property type="entry name" value="OTCase_ArgI"/>
</dbReference>
<dbReference type="NCBIfam" id="TIGR00658">
    <property type="entry name" value="orni_carb_tr"/>
    <property type="match status" value="1"/>
</dbReference>
<dbReference type="NCBIfam" id="NF001986">
    <property type="entry name" value="PRK00779.1"/>
    <property type="match status" value="1"/>
</dbReference>
<dbReference type="PANTHER" id="PTHR45753">
    <property type="entry name" value="ORNITHINE CARBAMOYLTRANSFERASE, MITOCHONDRIAL"/>
    <property type="match status" value="1"/>
</dbReference>
<dbReference type="PANTHER" id="PTHR45753:SF3">
    <property type="entry name" value="ORNITHINE TRANSCARBAMYLASE, MITOCHONDRIAL"/>
    <property type="match status" value="1"/>
</dbReference>
<dbReference type="Pfam" id="PF00185">
    <property type="entry name" value="OTCace"/>
    <property type="match status" value="1"/>
</dbReference>
<dbReference type="Pfam" id="PF02729">
    <property type="entry name" value="OTCace_N"/>
    <property type="match status" value="1"/>
</dbReference>
<dbReference type="PRINTS" id="PR00100">
    <property type="entry name" value="AOTCASE"/>
</dbReference>
<dbReference type="PRINTS" id="PR00102">
    <property type="entry name" value="OTCASE"/>
</dbReference>
<dbReference type="SUPFAM" id="SSF53671">
    <property type="entry name" value="Aspartate/ornithine carbamoyltransferase"/>
    <property type="match status" value="1"/>
</dbReference>
<dbReference type="PROSITE" id="PS00097">
    <property type="entry name" value="CARBAMOYLTRANSFERASE"/>
    <property type="match status" value="1"/>
</dbReference>
<protein>
    <recommendedName>
        <fullName evidence="2">Ornithine carbamoyltransferase</fullName>
        <shortName evidence="2">OTCase</shortName>
        <ecNumber evidence="2">2.1.3.3</ecNumber>
    </recommendedName>
</protein>
<comment type="function">
    <text evidence="1">Reversibly catalyzes the transfer of the carbamoyl group from carbamoyl phosphate (CP) to the N(epsilon) atom of ornithine (ORN) to produce L-citrulline.</text>
</comment>
<comment type="catalytic activity">
    <reaction evidence="2">
        <text>carbamoyl phosphate + L-ornithine = L-citrulline + phosphate + H(+)</text>
        <dbReference type="Rhea" id="RHEA:19513"/>
        <dbReference type="ChEBI" id="CHEBI:15378"/>
        <dbReference type="ChEBI" id="CHEBI:43474"/>
        <dbReference type="ChEBI" id="CHEBI:46911"/>
        <dbReference type="ChEBI" id="CHEBI:57743"/>
        <dbReference type="ChEBI" id="CHEBI:58228"/>
        <dbReference type="EC" id="2.1.3.3"/>
    </reaction>
</comment>
<comment type="pathway">
    <text evidence="2">Amino-acid biosynthesis; L-arginine biosynthesis; L-arginine from L-ornithine and carbamoyl phosphate: step 1/3.</text>
</comment>
<comment type="subcellular location">
    <subcellularLocation>
        <location evidence="2">Cytoplasm</location>
    </subcellularLocation>
</comment>
<comment type="similarity">
    <text evidence="2">Belongs to the aspartate/ornithine carbamoyltransferase superfamily. OTCase family.</text>
</comment>